<gene>
    <name type="ORF">NFIA_085780</name>
</gene>
<accession>A1DGW6</accession>
<organism>
    <name type="scientific">Neosartorya fischeri (strain ATCC 1020 / DSM 3700 / CBS 544.65 / FGSC A1164 / JCM 1740 / NRRL 181 / WB 181)</name>
    <name type="common">Aspergillus fischerianus</name>
    <dbReference type="NCBI Taxonomy" id="331117"/>
    <lineage>
        <taxon>Eukaryota</taxon>
        <taxon>Fungi</taxon>
        <taxon>Dikarya</taxon>
        <taxon>Ascomycota</taxon>
        <taxon>Pezizomycotina</taxon>
        <taxon>Eurotiomycetes</taxon>
        <taxon>Eurotiomycetidae</taxon>
        <taxon>Eurotiales</taxon>
        <taxon>Aspergillaceae</taxon>
        <taxon>Aspergillus</taxon>
        <taxon>Aspergillus subgen. Fumigati</taxon>
    </lineage>
</organism>
<proteinExistence type="inferred from homology"/>
<sequence>MSYEERVNAHPNLGDESDVEEEALVNDYREQVNFDDGMSELERTTSLGTGSQTQDLQAQLAAAATPLEYQATLETKFASYDNYCSLFHYILNSEGPVELEVPSYYWAWDVIDEFIYQFESFCRYRNRVARSGSNEEEAQLLRENPNTWGCYSVLNVLYSLIQKSQINEQLAAIKRGEDPLAFAGEYGSRPLYKMLGYFSIIGLLRVHCLLGDFSLALKTLDDIEMNKKAMFARVMAAHFTTYYYVGFSYMMMRRYGDAIRMFSHILVYVSRTKNFQKGGNSYDAIAKKNDQMYALIAICVALHPTRLDDTIHSALREKYGEQLLRLQHGGPDALPLFEELFRSACPKFISPTPPDFDNPALNIDPVDHHTAIFMDEVKNTLYNPTIRSYLKLYTTMDLKKLAGFLEVQPEVLRSWLLVNKQRSRQVRWVEGGLLEGEVVSANDLDYALENDLIHVSETKAGRRLVDWYLRNLARVY</sequence>
<dbReference type="EMBL" id="DS027696">
    <property type="protein sequence ID" value="EAW18623.1"/>
    <property type="molecule type" value="Genomic_DNA"/>
</dbReference>
<dbReference type="RefSeq" id="XP_001260520.1">
    <property type="nucleotide sequence ID" value="XM_001260519.1"/>
</dbReference>
<dbReference type="SMR" id="A1DGW6"/>
<dbReference type="STRING" id="331117.A1DGW6"/>
<dbReference type="EnsemblFungi" id="EAW18623">
    <property type="protein sequence ID" value="EAW18623"/>
    <property type="gene ID" value="NFIA_085780"/>
</dbReference>
<dbReference type="GeneID" id="4587078"/>
<dbReference type="KEGG" id="nfi:NFIA_085780"/>
<dbReference type="VEuPathDB" id="FungiDB:NFIA_085780"/>
<dbReference type="eggNOG" id="KOG3677">
    <property type="taxonomic scope" value="Eukaryota"/>
</dbReference>
<dbReference type="HOGENOM" id="CLU_029210_2_0_1"/>
<dbReference type="OMA" id="AGWFIRN"/>
<dbReference type="OrthoDB" id="15082at2759"/>
<dbReference type="Proteomes" id="UP000006702">
    <property type="component" value="Unassembled WGS sequence"/>
</dbReference>
<dbReference type="GO" id="GO:0016282">
    <property type="term" value="C:eukaryotic 43S preinitiation complex"/>
    <property type="evidence" value="ECO:0007669"/>
    <property type="project" value="UniProtKB-UniRule"/>
</dbReference>
<dbReference type="GO" id="GO:0033290">
    <property type="term" value="C:eukaryotic 48S preinitiation complex"/>
    <property type="evidence" value="ECO:0007669"/>
    <property type="project" value="UniProtKB-UniRule"/>
</dbReference>
<dbReference type="GO" id="GO:0005852">
    <property type="term" value="C:eukaryotic translation initiation factor 3 complex"/>
    <property type="evidence" value="ECO:0007669"/>
    <property type="project" value="UniProtKB-UniRule"/>
</dbReference>
<dbReference type="GO" id="GO:0003743">
    <property type="term" value="F:translation initiation factor activity"/>
    <property type="evidence" value="ECO:0007669"/>
    <property type="project" value="UniProtKB-UniRule"/>
</dbReference>
<dbReference type="GO" id="GO:0001732">
    <property type="term" value="P:formation of cytoplasmic translation initiation complex"/>
    <property type="evidence" value="ECO:0007669"/>
    <property type="project" value="UniProtKB-UniRule"/>
</dbReference>
<dbReference type="HAMAP" id="MF_03011">
    <property type="entry name" value="eIF3l"/>
    <property type="match status" value="1"/>
</dbReference>
<dbReference type="InterPro" id="IPR019382">
    <property type="entry name" value="eIF3l"/>
</dbReference>
<dbReference type="InterPro" id="IPR000717">
    <property type="entry name" value="PCI_dom"/>
</dbReference>
<dbReference type="PANTHER" id="PTHR13242">
    <property type="entry name" value="EUKARYOTIC TRANSLATION INITIATION FACTOR 3"/>
    <property type="match status" value="1"/>
</dbReference>
<dbReference type="PANTHER" id="PTHR13242:SF0">
    <property type="entry name" value="EUKARYOTIC TRANSLATION INITIATION FACTOR 3 SUBUNIT L"/>
    <property type="match status" value="1"/>
</dbReference>
<dbReference type="Pfam" id="PF10255">
    <property type="entry name" value="Paf67"/>
    <property type="match status" value="1"/>
</dbReference>
<dbReference type="PROSITE" id="PS50250">
    <property type="entry name" value="PCI"/>
    <property type="match status" value="1"/>
</dbReference>
<reference key="1">
    <citation type="journal article" date="2008" name="PLoS Genet.">
        <title>Genomic islands in the pathogenic filamentous fungus Aspergillus fumigatus.</title>
        <authorList>
            <person name="Fedorova N.D."/>
            <person name="Khaldi N."/>
            <person name="Joardar V.S."/>
            <person name="Maiti R."/>
            <person name="Amedeo P."/>
            <person name="Anderson M.J."/>
            <person name="Crabtree J."/>
            <person name="Silva J.C."/>
            <person name="Badger J.H."/>
            <person name="Albarraq A."/>
            <person name="Angiuoli S."/>
            <person name="Bussey H."/>
            <person name="Bowyer P."/>
            <person name="Cotty P.J."/>
            <person name="Dyer P.S."/>
            <person name="Egan A."/>
            <person name="Galens K."/>
            <person name="Fraser-Liggett C.M."/>
            <person name="Haas B.J."/>
            <person name="Inman J.M."/>
            <person name="Kent R."/>
            <person name="Lemieux S."/>
            <person name="Malavazi I."/>
            <person name="Orvis J."/>
            <person name="Roemer T."/>
            <person name="Ronning C.M."/>
            <person name="Sundaram J.P."/>
            <person name="Sutton G."/>
            <person name="Turner G."/>
            <person name="Venter J.C."/>
            <person name="White O.R."/>
            <person name="Whitty B.R."/>
            <person name="Youngman P."/>
            <person name="Wolfe K.H."/>
            <person name="Goldman G.H."/>
            <person name="Wortman J.R."/>
            <person name="Jiang B."/>
            <person name="Denning D.W."/>
            <person name="Nierman W.C."/>
        </authorList>
    </citation>
    <scope>NUCLEOTIDE SEQUENCE [LARGE SCALE GENOMIC DNA]</scope>
    <source>
        <strain>ATCC 1020 / DSM 3700 / CBS 544.65 / FGSC A1164 / JCM 1740 / NRRL 181 / WB 181</strain>
    </source>
</reference>
<evidence type="ECO:0000255" key="1">
    <source>
        <dbReference type="HAMAP-Rule" id="MF_03011"/>
    </source>
</evidence>
<evidence type="ECO:0000255" key="2">
    <source>
        <dbReference type="PROSITE-ProRule" id="PRU01185"/>
    </source>
</evidence>
<comment type="function">
    <text evidence="1">Component of the eukaryotic translation initiation factor 3 (eIF-3) complex, which is involved in protein synthesis of a specialized repertoire of mRNAs and, together with other initiation factors, stimulates binding of mRNA and methionyl-tRNAi to the 40S ribosome. The eIF-3 complex specifically targets and initiates translation of a subset of mRNAs involved in cell proliferation.</text>
</comment>
<comment type="subunit">
    <text evidence="1">Component of the eukaryotic translation initiation factor 3 (eIF-3) complex.</text>
</comment>
<comment type="subcellular location">
    <subcellularLocation>
        <location evidence="1">Cytoplasm</location>
    </subcellularLocation>
</comment>
<comment type="similarity">
    <text evidence="1">Belongs to the eIF-3 subunit L family.</text>
</comment>
<feature type="chain" id="PRO_0000364267" description="Eukaryotic translation initiation factor 3 subunit L">
    <location>
        <begin position="1"/>
        <end position="476"/>
    </location>
</feature>
<feature type="domain" description="PCI" evidence="2">
    <location>
        <begin position="257"/>
        <end position="452"/>
    </location>
</feature>
<keyword id="KW-0963">Cytoplasm</keyword>
<keyword id="KW-0396">Initiation factor</keyword>
<keyword id="KW-0648">Protein biosynthesis</keyword>
<keyword id="KW-1185">Reference proteome</keyword>
<protein>
    <recommendedName>
        <fullName evidence="1">Eukaryotic translation initiation factor 3 subunit L</fullName>
        <shortName evidence="1">eIF3l</shortName>
    </recommendedName>
</protein>
<name>EIF3L_NEOFI</name>